<accession>B5YYC1</accession>
<gene>
    <name evidence="1" type="primary">ispH</name>
    <name type="ordered locus">ECH74115_0031</name>
</gene>
<organism>
    <name type="scientific">Escherichia coli O157:H7 (strain EC4115 / EHEC)</name>
    <dbReference type="NCBI Taxonomy" id="444450"/>
    <lineage>
        <taxon>Bacteria</taxon>
        <taxon>Pseudomonadati</taxon>
        <taxon>Pseudomonadota</taxon>
        <taxon>Gammaproteobacteria</taxon>
        <taxon>Enterobacterales</taxon>
        <taxon>Enterobacteriaceae</taxon>
        <taxon>Escherichia</taxon>
    </lineage>
</organism>
<comment type="function">
    <text evidence="1">Catalyzes the conversion of 1-hydroxy-2-methyl-2-(E)-butenyl 4-diphosphate (HMBPP) into a mixture of isopentenyl diphosphate (IPP) and dimethylallyl diphosphate (DMAPP). Acts in the terminal step of the DOXP/MEP pathway for isoprenoid precursor biosynthesis.</text>
</comment>
<comment type="catalytic activity">
    <reaction evidence="1">
        <text>isopentenyl diphosphate + 2 oxidized [2Fe-2S]-[ferredoxin] + H2O = (2E)-4-hydroxy-3-methylbut-2-enyl diphosphate + 2 reduced [2Fe-2S]-[ferredoxin] + 2 H(+)</text>
        <dbReference type="Rhea" id="RHEA:24488"/>
        <dbReference type="Rhea" id="RHEA-COMP:10000"/>
        <dbReference type="Rhea" id="RHEA-COMP:10001"/>
        <dbReference type="ChEBI" id="CHEBI:15377"/>
        <dbReference type="ChEBI" id="CHEBI:15378"/>
        <dbReference type="ChEBI" id="CHEBI:33737"/>
        <dbReference type="ChEBI" id="CHEBI:33738"/>
        <dbReference type="ChEBI" id="CHEBI:128753"/>
        <dbReference type="ChEBI" id="CHEBI:128769"/>
        <dbReference type="EC" id="1.17.7.4"/>
    </reaction>
</comment>
<comment type="catalytic activity">
    <reaction evidence="1">
        <text>dimethylallyl diphosphate + 2 oxidized [2Fe-2S]-[ferredoxin] + H2O = (2E)-4-hydroxy-3-methylbut-2-enyl diphosphate + 2 reduced [2Fe-2S]-[ferredoxin] + 2 H(+)</text>
        <dbReference type="Rhea" id="RHEA:24825"/>
        <dbReference type="Rhea" id="RHEA-COMP:10000"/>
        <dbReference type="Rhea" id="RHEA-COMP:10001"/>
        <dbReference type="ChEBI" id="CHEBI:15377"/>
        <dbReference type="ChEBI" id="CHEBI:15378"/>
        <dbReference type="ChEBI" id="CHEBI:33737"/>
        <dbReference type="ChEBI" id="CHEBI:33738"/>
        <dbReference type="ChEBI" id="CHEBI:57623"/>
        <dbReference type="ChEBI" id="CHEBI:128753"/>
        <dbReference type="EC" id="1.17.7.4"/>
    </reaction>
</comment>
<comment type="cofactor">
    <cofactor evidence="1">
        <name>[4Fe-4S] cluster</name>
        <dbReference type="ChEBI" id="CHEBI:49883"/>
    </cofactor>
    <text evidence="1">Binds 1 [4Fe-4S] cluster per subunit.</text>
</comment>
<comment type="pathway">
    <text evidence="1">Isoprenoid biosynthesis; dimethylallyl diphosphate biosynthesis; dimethylallyl diphosphate from (2E)-4-hydroxy-3-methylbutenyl diphosphate: step 1/1.</text>
</comment>
<comment type="pathway">
    <text evidence="1">Isoprenoid biosynthesis; isopentenyl diphosphate biosynthesis via DXP pathway; isopentenyl diphosphate from 1-deoxy-D-xylulose 5-phosphate: step 6/6.</text>
</comment>
<comment type="subunit">
    <text evidence="1">Homodimer.</text>
</comment>
<comment type="similarity">
    <text evidence="1">Belongs to the IspH family.</text>
</comment>
<proteinExistence type="inferred from homology"/>
<name>ISPH_ECO5E</name>
<feature type="chain" id="PRO_1000098945" description="4-hydroxy-3-methylbut-2-enyl diphosphate reductase">
    <location>
        <begin position="1"/>
        <end position="316"/>
    </location>
</feature>
<feature type="active site" description="Proton donor" evidence="1">
    <location>
        <position position="126"/>
    </location>
</feature>
<feature type="binding site" evidence="1">
    <location>
        <position position="12"/>
    </location>
    <ligand>
        <name>[4Fe-4S] cluster</name>
        <dbReference type="ChEBI" id="CHEBI:49883"/>
    </ligand>
</feature>
<feature type="binding site" evidence="1">
    <location>
        <position position="41"/>
    </location>
    <ligand>
        <name>(2E)-4-hydroxy-3-methylbut-2-enyl diphosphate</name>
        <dbReference type="ChEBI" id="CHEBI:128753"/>
    </ligand>
</feature>
<feature type="binding site" evidence="1">
    <location>
        <position position="41"/>
    </location>
    <ligand>
        <name>dimethylallyl diphosphate</name>
        <dbReference type="ChEBI" id="CHEBI:57623"/>
    </ligand>
</feature>
<feature type="binding site" evidence="1">
    <location>
        <position position="41"/>
    </location>
    <ligand>
        <name>isopentenyl diphosphate</name>
        <dbReference type="ChEBI" id="CHEBI:128769"/>
    </ligand>
</feature>
<feature type="binding site" evidence="1">
    <location>
        <position position="74"/>
    </location>
    <ligand>
        <name>(2E)-4-hydroxy-3-methylbut-2-enyl diphosphate</name>
        <dbReference type="ChEBI" id="CHEBI:128753"/>
    </ligand>
</feature>
<feature type="binding site" evidence="1">
    <location>
        <position position="74"/>
    </location>
    <ligand>
        <name>dimethylallyl diphosphate</name>
        <dbReference type="ChEBI" id="CHEBI:57623"/>
    </ligand>
</feature>
<feature type="binding site" evidence="1">
    <location>
        <position position="74"/>
    </location>
    <ligand>
        <name>isopentenyl diphosphate</name>
        <dbReference type="ChEBI" id="CHEBI:128769"/>
    </ligand>
</feature>
<feature type="binding site" evidence="1">
    <location>
        <position position="96"/>
    </location>
    <ligand>
        <name>[4Fe-4S] cluster</name>
        <dbReference type="ChEBI" id="CHEBI:49883"/>
    </ligand>
</feature>
<feature type="binding site" evidence="1">
    <location>
        <position position="124"/>
    </location>
    <ligand>
        <name>(2E)-4-hydroxy-3-methylbut-2-enyl diphosphate</name>
        <dbReference type="ChEBI" id="CHEBI:128753"/>
    </ligand>
</feature>
<feature type="binding site" evidence="1">
    <location>
        <position position="124"/>
    </location>
    <ligand>
        <name>dimethylallyl diphosphate</name>
        <dbReference type="ChEBI" id="CHEBI:57623"/>
    </ligand>
</feature>
<feature type="binding site" evidence="1">
    <location>
        <position position="124"/>
    </location>
    <ligand>
        <name>isopentenyl diphosphate</name>
        <dbReference type="ChEBI" id="CHEBI:128769"/>
    </ligand>
</feature>
<feature type="binding site" evidence="1">
    <location>
        <position position="167"/>
    </location>
    <ligand>
        <name>(2E)-4-hydroxy-3-methylbut-2-enyl diphosphate</name>
        <dbReference type="ChEBI" id="CHEBI:128753"/>
    </ligand>
</feature>
<feature type="binding site" evidence="1">
    <location>
        <position position="197"/>
    </location>
    <ligand>
        <name>[4Fe-4S] cluster</name>
        <dbReference type="ChEBI" id="CHEBI:49883"/>
    </ligand>
</feature>
<feature type="binding site" evidence="1">
    <location>
        <position position="225"/>
    </location>
    <ligand>
        <name>(2E)-4-hydroxy-3-methylbut-2-enyl diphosphate</name>
        <dbReference type="ChEBI" id="CHEBI:128753"/>
    </ligand>
</feature>
<feature type="binding site" evidence="1">
    <location>
        <position position="225"/>
    </location>
    <ligand>
        <name>dimethylallyl diphosphate</name>
        <dbReference type="ChEBI" id="CHEBI:57623"/>
    </ligand>
</feature>
<feature type="binding site" evidence="1">
    <location>
        <position position="225"/>
    </location>
    <ligand>
        <name>isopentenyl diphosphate</name>
        <dbReference type="ChEBI" id="CHEBI:128769"/>
    </ligand>
</feature>
<feature type="binding site" evidence="1">
    <location>
        <position position="226"/>
    </location>
    <ligand>
        <name>(2E)-4-hydroxy-3-methylbut-2-enyl diphosphate</name>
        <dbReference type="ChEBI" id="CHEBI:128753"/>
    </ligand>
</feature>
<feature type="binding site" evidence="1">
    <location>
        <position position="226"/>
    </location>
    <ligand>
        <name>dimethylallyl diphosphate</name>
        <dbReference type="ChEBI" id="CHEBI:57623"/>
    </ligand>
</feature>
<feature type="binding site" evidence="1">
    <location>
        <position position="226"/>
    </location>
    <ligand>
        <name>isopentenyl diphosphate</name>
        <dbReference type="ChEBI" id="CHEBI:128769"/>
    </ligand>
</feature>
<feature type="binding site" evidence="1">
    <location>
        <position position="227"/>
    </location>
    <ligand>
        <name>(2E)-4-hydroxy-3-methylbut-2-enyl diphosphate</name>
        <dbReference type="ChEBI" id="CHEBI:128753"/>
    </ligand>
</feature>
<feature type="binding site" evidence="1">
    <location>
        <position position="227"/>
    </location>
    <ligand>
        <name>dimethylallyl diphosphate</name>
        <dbReference type="ChEBI" id="CHEBI:57623"/>
    </ligand>
</feature>
<feature type="binding site" evidence="1">
    <location>
        <position position="227"/>
    </location>
    <ligand>
        <name>isopentenyl diphosphate</name>
        <dbReference type="ChEBI" id="CHEBI:128769"/>
    </ligand>
</feature>
<feature type="binding site" evidence="1">
    <location>
        <position position="269"/>
    </location>
    <ligand>
        <name>(2E)-4-hydroxy-3-methylbut-2-enyl diphosphate</name>
        <dbReference type="ChEBI" id="CHEBI:128753"/>
    </ligand>
</feature>
<feature type="binding site" evidence="1">
    <location>
        <position position="269"/>
    </location>
    <ligand>
        <name>dimethylallyl diphosphate</name>
        <dbReference type="ChEBI" id="CHEBI:57623"/>
    </ligand>
</feature>
<feature type="binding site" evidence="1">
    <location>
        <position position="269"/>
    </location>
    <ligand>
        <name>isopentenyl diphosphate</name>
        <dbReference type="ChEBI" id="CHEBI:128769"/>
    </ligand>
</feature>
<keyword id="KW-0004">4Fe-4S</keyword>
<keyword id="KW-0408">Iron</keyword>
<keyword id="KW-0411">Iron-sulfur</keyword>
<keyword id="KW-0414">Isoprene biosynthesis</keyword>
<keyword id="KW-0479">Metal-binding</keyword>
<keyword id="KW-0560">Oxidoreductase</keyword>
<dbReference type="EC" id="1.17.7.4" evidence="1"/>
<dbReference type="EMBL" id="CP001164">
    <property type="protein sequence ID" value="ACI37477.1"/>
    <property type="molecule type" value="Genomic_DNA"/>
</dbReference>
<dbReference type="RefSeq" id="WP_001166395.1">
    <property type="nucleotide sequence ID" value="NC_011353.1"/>
</dbReference>
<dbReference type="SMR" id="B5YYC1"/>
<dbReference type="GeneID" id="93777407"/>
<dbReference type="KEGG" id="ecf:ECH74115_0031"/>
<dbReference type="HOGENOM" id="CLU_027486_1_0_6"/>
<dbReference type="UniPathway" id="UPA00056">
    <property type="reaction ID" value="UER00097"/>
</dbReference>
<dbReference type="UniPathway" id="UPA00059">
    <property type="reaction ID" value="UER00105"/>
</dbReference>
<dbReference type="GO" id="GO:0051539">
    <property type="term" value="F:4 iron, 4 sulfur cluster binding"/>
    <property type="evidence" value="ECO:0007669"/>
    <property type="project" value="UniProtKB-UniRule"/>
</dbReference>
<dbReference type="GO" id="GO:0051745">
    <property type="term" value="F:4-hydroxy-3-methylbut-2-enyl diphosphate reductase activity"/>
    <property type="evidence" value="ECO:0007669"/>
    <property type="project" value="UniProtKB-UniRule"/>
</dbReference>
<dbReference type="GO" id="GO:0046872">
    <property type="term" value="F:metal ion binding"/>
    <property type="evidence" value="ECO:0007669"/>
    <property type="project" value="UniProtKB-KW"/>
</dbReference>
<dbReference type="GO" id="GO:0050992">
    <property type="term" value="P:dimethylallyl diphosphate biosynthetic process"/>
    <property type="evidence" value="ECO:0007669"/>
    <property type="project" value="UniProtKB-UniRule"/>
</dbReference>
<dbReference type="GO" id="GO:0019288">
    <property type="term" value="P:isopentenyl diphosphate biosynthetic process, methylerythritol 4-phosphate pathway"/>
    <property type="evidence" value="ECO:0007669"/>
    <property type="project" value="UniProtKB-UniRule"/>
</dbReference>
<dbReference type="GO" id="GO:0016114">
    <property type="term" value="P:terpenoid biosynthetic process"/>
    <property type="evidence" value="ECO:0007669"/>
    <property type="project" value="UniProtKB-UniRule"/>
</dbReference>
<dbReference type="CDD" id="cd13944">
    <property type="entry name" value="lytB_ispH"/>
    <property type="match status" value="1"/>
</dbReference>
<dbReference type="FunFam" id="3.40.1010.20:FF:000001">
    <property type="entry name" value="4-hydroxy-3-methylbut-2-enyl diphosphate reductase"/>
    <property type="match status" value="1"/>
</dbReference>
<dbReference type="FunFam" id="3.40.50.11270:FF:000001">
    <property type="entry name" value="4-hydroxy-3-methylbut-2-enyl diphosphate reductase"/>
    <property type="match status" value="1"/>
</dbReference>
<dbReference type="Gene3D" id="3.40.50.11270">
    <property type="match status" value="1"/>
</dbReference>
<dbReference type="Gene3D" id="3.40.1010.20">
    <property type="entry name" value="4-hydroxy-3-methylbut-2-enyl diphosphate reductase, catalytic domain"/>
    <property type="match status" value="2"/>
</dbReference>
<dbReference type="HAMAP" id="MF_00191">
    <property type="entry name" value="IspH"/>
    <property type="match status" value="1"/>
</dbReference>
<dbReference type="InterPro" id="IPR003451">
    <property type="entry name" value="LytB/IspH"/>
</dbReference>
<dbReference type="NCBIfam" id="TIGR00216">
    <property type="entry name" value="ispH_lytB"/>
    <property type="match status" value="1"/>
</dbReference>
<dbReference type="NCBIfam" id="NF002188">
    <property type="entry name" value="PRK01045.1-2"/>
    <property type="match status" value="1"/>
</dbReference>
<dbReference type="NCBIfam" id="NF002190">
    <property type="entry name" value="PRK01045.1-4"/>
    <property type="match status" value="1"/>
</dbReference>
<dbReference type="PANTHER" id="PTHR30426">
    <property type="entry name" value="4-HYDROXY-3-METHYLBUT-2-ENYL DIPHOSPHATE REDUCTASE"/>
    <property type="match status" value="1"/>
</dbReference>
<dbReference type="PANTHER" id="PTHR30426:SF0">
    <property type="entry name" value="4-HYDROXY-3-METHYLBUT-2-ENYL DIPHOSPHATE REDUCTASE"/>
    <property type="match status" value="1"/>
</dbReference>
<dbReference type="Pfam" id="PF02401">
    <property type="entry name" value="LYTB"/>
    <property type="match status" value="1"/>
</dbReference>
<protein>
    <recommendedName>
        <fullName evidence="1">4-hydroxy-3-methylbut-2-enyl diphosphate reductase</fullName>
        <shortName evidence="1">HMBPP reductase</shortName>
        <ecNumber evidence="1">1.17.7.4</ecNumber>
    </recommendedName>
</protein>
<reference key="1">
    <citation type="journal article" date="2011" name="Proc. Natl. Acad. Sci. U.S.A.">
        <title>Genomic anatomy of Escherichia coli O157:H7 outbreaks.</title>
        <authorList>
            <person name="Eppinger M."/>
            <person name="Mammel M.K."/>
            <person name="Leclerc J.E."/>
            <person name="Ravel J."/>
            <person name="Cebula T.A."/>
        </authorList>
    </citation>
    <scope>NUCLEOTIDE SEQUENCE [LARGE SCALE GENOMIC DNA]</scope>
    <source>
        <strain>EC4115 / EHEC</strain>
    </source>
</reference>
<sequence>MQILLANPRGFCAGVDRAISIVENALAIYGAPIYVRHEVVHNRYVVDSLRERGAIFIEQISEVPDGAILIFSAHGVSQAVRNEAKSRDLTVFDATCPLVTKVHMEVARASRRGEESILIGHAGHPEVEGTMGQYSNPEGGMYLVESPDDVWKLTVKNEEKLSFMTQTTLSVDDTSDVIDALRKRFPKIVGPRKDDICYATTNRQEAVRALAEQAEVVLVVGSKNSSNSNRLAELAQRMGKRAFLIDDAKDIQEEWVKEVKCVGVTAGASAPDILVQNVVARLQQLGGGEAIPLEGREENIVFEVPKELRVDIREVD</sequence>
<evidence type="ECO:0000255" key="1">
    <source>
        <dbReference type="HAMAP-Rule" id="MF_00191"/>
    </source>
</evidence>